<evidence type="ECO:0000255" key="1">
    <source>
        <dbReference type="HAMAP-Rule" id="MF_00182"/>
    </source>
</evidence>
<protein>
    <recommendedName>
        <fullName evidence="1">Methionyl-tRNA formyltransferase</fullName>
        <ecNumber evidence="1">2.1.2.9</ecNumber>
    </recommendedName>
</protein>
<accession>C1KWC2</accession>
<dbReference type="EC" id="2.1.2.9" evidence="1"/>
<dbReference type="EMBL" id="FM242711">
    <property type="protein sequence ID" value="CAS05597.1"/>
    <property type="molecule type" value="Genomic_DNA"/>
</dbReference>
<dbReference type="RefSeq" id="WP_010958956.1">
    <property type="nucleotide sequence ID" value="NC_012488.1"/>
</dbReference>
<dbReference type="SMR" id="C1KWC2"/>
<dbReference type="KEGG" id="lmc:Lm4b_01839"/>
<dbReference type="HOGENOM" id="CLU_033347_1_1_9"/>
<dbReference type="GO" id="GO:0005829">
    <property type="term" value="C:cytosol"/>
    <property type="evidence" value="ECO:0007669"/>
    <property type="project" value="TreeGrafter"/>
</dbReference>
<dbReference type="GO" id="GO:0004479">
    <property type="term" value="F:methionyl-tRNA formyltransferase activity"/>
    <property type="evidence" value="ECO:0007669"/>
    <property type="project" value="UniProtKB-UniRule"/>
</dbReference>
<dbReference type="CDD" id="cd08646">
    <property type="entry name" value="FMT_core_Met-tRNA-FMT_N"/>
    <property type="match status" value="1"/>
</dbReference>
<dbReference type="CDD" id="cd08704">
    <property type="entry name" value="Met_tRNA_FMT_C"/>
    <property type="match status" value="1"/>
</dbReference>
<dbReference type="FunFam" id="3.40.50.12230:FF:000001">
    <property type="entry name" value="Methionyl-tRNA formyltransferase"/>
    <property type="match status" value="1"/>
</dbReference>
<dbReference type="FunFam" id="3.40.50.170:FF:000004">
    <property type="entry name" value="Methionyl-tRNA formyltransferase"/>
    <property type="match status" value="1"/>
</dbReference>
<dbReference type="Gene3D" id="3.40.50.12230">
    <property type="match status" value="1"/>
</dbReference>
<dbReference type="HAMAP" id="MF_00182">
    <property type="entry name" value="Formyl_trans"/>
    <property type="match status" value="1"/>
</dbReference>
<dbReference type="InterPro" id="IPR005794">
    <property type="entry name" value="Fmt"/>
</dbReference>
<dbReference type="InterPro" id="IPR005793">
    <property type="entry name" value="Formyl_trans_C"/>
</dbReference>
<dbReference type="InterPro" id="IPR002376">
    <property type="entry name" value="Formyl_transf_N"/>
</dbReference>
<dbReference type="InterPro" id="IPR036477">
    <property type="entry name" value="Formyl_transf_N_sf"/>
</dbReference>
<dbReference type="InterPro" id="IPR011034">
    <property type="entry name" value="Formyl_transferase-like_C_sf"/>
</dbReference>
<dbReference type="InterPro" id="IPR001555">
    <property type="entry name" value="GART_AS"/>
</dbReference>
<dbReference type="InterPro" id="IPR044135">
    <property type="entry name" value="Met-tRNA-FMT_C"/>
</dbReference>
<dbReference type="InterPro" id="IPR041711">
    <property type="entry name" value="Met-tRNA-FMT_N"/>
</dbReference>
<dbReference type="NCBIfam" id="TIGR00460">
    <property type="entry name" value="fmt"/>
    <property type="match status" value="1"/>
</dbReference>
<dbReference type="PANTHER" id="PTHR11138">
    <property type="entry name" value="METHIONYL-TRNA FORMYLTRANSFERASE"/>
    <property type="match status" value="1"/>
</dbReference>
<dbReference type="PANTHER" id="PTHR11138:SF5">
    <property type="entry name" value="METHIONYL-TRNA FORMYLTRANSFERASE, MITOCHONDRIAL"/>
    <property type="match status" value="1"/>
</dbReference>
<dbReference type="Pfam" id="PF02911">
    <property type="entry name" value="Formyl_trans_C"/>
    <property type="match status" value="1"/>
</dbReference>
<dbReference type="Pfam" id="PF00551">
    <property type="entry name" value="Formyl_trans_N"/>
    <property type="match status" value="1"/>
</dbReference>
<dbReference type="SUPFAM" id="SSF50486">
    <property type="entry name" value="FMT C-terminal domain-like"/>
    <property type="match status" value="1"/>
</dbReference>
<dbReference type="SUPFAM" id="SSF53328">
    <property type="entry name" value="Formyltransferase"/>
    <property type="match status" value="1"/>
</dbReference>
<dbReference type="PROSITE" id="PS00373">
    <property type="entry name" value="GART"/>
    <property type="match status" value="1"/>
</dbReference>
<organism>
    <name type="scientific">Listeria monocytogenes serotype 4b (strain CLIP80459)</name>
    <dbReference type="NCBI Taxonomy" id="568819"/>
    <lineage>
        <taxon>Bacteria</taxon>
        <taxon>Bacillati</taxon>
        <taxon>Bacillota</taxon>
        <taxon>Bacilli</taxon>
        <taxon>Bacillales</taxon>
        <taxon>Listeriaceae</taxon>
        <taxon>Listeria</taxon>
    </lineage>
</organism>
<gene>
    <name evidence="1" type="primary">fmt</name>
    <name type="ordered locus">Lm4b_01839</name>
</gene>
<proteinExistence type="inferred from homology"/>
<feature type="chain" id="PRO_1000203865" description="Methionyl-tRNA formyltransferase">
    <location>
        <begin position="1"/>
        <end position="312"/>
    </location>
</feature>
<feature type="binding site" evidence="1">
    <location>
        <begin position="109"/>
        <end position="112"/>
    </location>
    <ligand>
        <name>(6S)-5,6,7,8-tetrahydrofolate</name>
        <dbReference type="ChEBI" id="CHEBI:57453"/>
    </ligand>
</feature>
<sequence>MTKIIFMGTPEFSVPVLTQLASTYDVVAVVTQPDRPVGRKRVLTPPPVKKAALELAIPVYQPEKLRTSSELEELIALEADLLVTAAYGQILPNSLLESPKHGAINVHASLLPEYRGGAPVHYALLDGKTETGVTIMYMVEKLDAGDMISQRKIPITDEDNTGTMFDKLSKLGAELLMDTLPDFLAGKITAIPQDPEKVTFARNISREQEKIDWTKPGRTIFNQIRGLSPWPVAYTTLEEKPFKIWEATYEETKEDGEPGAILADKTTLKIVAGDGTLIVPTVIQPAGKPKMDVHSFMTGAGRNLSKTTRFGE</sequence>
<name>FMT_LISMC</name>
<reference key="1">
    <citation type="journal article" date="2012" name="BMC Genomics">
        <title>Comparative genomics and transcriptomics of lineages I, II, and III strains of Listeria monocytogenes.</title>
        <authorList>
            <person name="Hain T."/>
            <person name="Ghai R."/>
            <person name="Billion A."/>
            <person name="Kuenne C.T."/>
            <person name="Steinweg C."/>
            <person name="Izar B."/>
            <person name="Mohamed W."/>
            <person name="Mraheil M."/>
            <person name="Domann E."/>
            <person name="Schaffrath S."/>
            <person name="Karst U."/>
            <person name="Goesmann A."/>
            <person name="Oehm S."/>
            <person name="Puhler A."/>
            <person name="Merkl R."/>
            <person name="Vorwerk S."/>
            <person name="Glaser P."/>
            <person name="Garrido P."/>
            <person name="Rusniok C."/>
            <person name="Buchrieser C."/>
            <person name="Goebel W."/>
            <person name="Chakraborty T."/>
        </authorList>
    </citation>
    <scope>NUCLEOTIDE SEQUENCE [LARGE SCALE GENOMIC DNA]</scope>
    <source>
        <strain>CLIP80459</strain>
    </source>
</reference>
<comment type="function">
    <text evidence="1">Attaches a formyl group to the free amino group of methionyl-tRNA(fMet). The formyl group appears to play a dual role in the initiator identity of N-formylmethionyl-tRNA by promoting its recognition by IF2 and preventing the misappropriation of this tRNA by the elongation apparatus.</text>
</comment>
<comment type="catalytic activity">
    <reaction evidence="1">
        <text>L-methionyl-tRNA(fMet) + (6R)-10-formyltetrahydrofolate = N-formyl-L-methionyl-tRNA(fMet) + (6S)-5,6,7,8-tetrahydrofolate + H(+)</text>
        <dbReference type="Rhea" id="RHEA:24380"/>
        <dbReference type="Rhea" id="RHEA-COMP:9952"/>
        <dbReference type="Rhea" id="RHEA-COMP:9953"/>
        <dbReference type="ChEBI" id="CHEBI:15378"/>
        <dbReference type="ChEBI" id="CHEBI:57453"/>
        <dbReference type="ChEBI" id="CHEBI:78530"/>
        <dbReference type="ChEBI" id="CHEBI:78844"/>
        <dbReference type="ChEBI" id="CHEBI:195366"/>
        <dbReference type="EC" id="2.1.2.9"/>
    </reaction>
</comment>
<comment type="similarity">
    <text evidence="1">Belongs to the Fmt family.</text>
</comment>
<keyword id="KW-0648">Protein biosynthesis</keyword>
<keyword id="KW-0808">Transferase</keyword>